<comment type="function">
    <text evidence="1">Part of the phosphoribosylformylglycinamidine synthase complex involved in the purines biosynthetic pathway. Catalyzes the ATP-dependent conversion of formylglycinamide ribonucleotide (FGAR) and glutamine to yield formylglycinamidine ribonucleotide (FGAM) and glutamate. The FGAM synthase complex is composed of three subunits. PurQ produces an ammonia molecule by converting glutamine to glutamate. PurL transfers the ammonia molecule to FGAR to form FGAM in an ATP-dependent manner. PurS interacts with PurQ and PurL and is thought to assist in the transfer of the ammonia molecule from PurQ to PurL.</text>
</comment>
<comment type="catalytic activity">
    <reaction evidence="1">
        <text>N(2)-formyl-N(1)-(5-phospho-beta-D-ribosyl)glycinamide + L-glutamine + ATP + H2O = 2-formamido-N(1)-(5-O-phospho-beta-D-ribosyl)acetamidine + L-glutamate + ADP + phosphate + H(+)</text>
        <dbReference type="Rhea" id="RHEA:17129"/>
        <dbReference type="ChEBI" id="CHEBI:15377"/>
        <dbReference type="ChEBI" id="CHEBI:15378"/>
        <dbReference type="ChEBI" id="CHEBI:29985"/>
        <dbReference type="ChEBI" id="CHEBI:30616"/>
        <dbReference type="ChEBI" id="CHEBI:43474"/>
        <dbReference type="ChEBI" id="CHEBI:58359"/>
        <dbReference type="ChEBI" id="CHEBI:147286"/>
        <dbReference type="ChEBI" id="CHEBI:147287"/>
        <dbReference type="ChEBI" id="CHEBI:456216"/>
        <dbReference type="EC" id="6.3.5.3"/>
    </reaction>
</comment>
<comment type="catalytic activity">
    <reaction evidence="1">
        <text>L-glutamine + H2O = L-glutamate + NH4(+)</text>
        <dbReference type="Rhea" id="RHEA:15889"/>
        <dbReference type="ChEBI" id="CHEBI:15377"/>
        <dbReference type="ChEBI" id="CHEBI:28938"/>
        <dbReference type="ChEBI" id="CHEBI:29985"/>
        <dbReference type="ChEBI" id="CHEBI:58359"/>
        <dbReference type="EC" id="3.5.1.2"/>
    </reaction>
</comment>
<comment type="pathway">
    <text evidence="1">Purine metabolism; IMP biosynthesis via de novo pathway; 5-amino-1-(5-phospho-D-ribosyl)imidazole from N(2)-formyl-N(1)-(5-phospho-D-ribosyl)glycinamide: step 1/2.</text>
</comment>
<comment type="subunit">
    <text evidence="1">Part of the FGAM synthase complex composed of 1 PurL, 1 PurQ and 2 PurS subunits.</text>
</comment>
<comment type="subcellular location">
    <subcellularLocation>
        <location evidence="1">Cytoplasm</location>
    </subcellularLocation>
</comment>
<keyword id="KW-0067">ATP-binding</keyword>
<keyword id="KW-0963">Cytoplasm</keyword>
<keyword id="KW-0315">Glutamine amidotransferase</keyword>
<keyword id="KW-0378">Hydrolase</keyword>
<keyword id="KW-0436">Ligase</keyword>
<keyword id="KW-0547">Nucleotide-binding</keyword>
<keyword id="KW-0658">Purine biosynthesis</keyword>
<keyword id="KW-1185">Reference proteome</keyword>
<accession>Q1AXB7</accession>
<dbReference type="EC" id="6.3.5.3" evidence="1"/>
<dbReference type="EC" id="3.5.1.2" evidence="1"/>
<dbReference type="EMBL" id="CP000386">
    <property type="protein sequence ID" value="ABG03961.1"/>
    <property type="molecule type" value="Genomic_DNA"/>
</dbReference>
<dbReference type="RefSeq" id="WP_011563979.1">
    <property type="nucleotide sequence ID" value="NC_008148.1"/>
</dbReference>
<dbReference type="SMR" id="Q1AXB7"/>
<dbReference type="STRING" id="266117.Rxyl_0995"/>
<dbReference type="KEGG" id="rxy:Rxyl_0995"/>
<dbReference type="eggNOG" id="COG0047">
    <property type="taxonomic scope" value="Bacteria"/>
</dbReference>
<dbReference type="HOGENOM" id="CLU_001031_3_1_11"/>
<dbReference type="OrthoDB" id="9804441at2"/>
<dbReference type="PhylomeDB" id="Q1AXB7"/>
<dbReference type="UniPathway" id="UPA00074">
    <property type="reaction ID" value="UER00128"/>
</dbReference>
<dbReference type="Proteomes" id="UP000006637">
    <property type="component" value="Chromosome"/>
</dbReference>
<dbReference type="GO" id="GO:0005737">
    <property type="term" value="C:cytoplasm"/>
    <property type="evidence" value="ECO:0007669"/>
    <property type="project" value="UniProtKB-SubCell"/>
</dbReference>
<dbReference type="GO" id="GO:0005524">
    <property type="term" value="F:ATP binding"/>
    <property type="evidence" value="ECO:0007669"/>
    <property type="project" value="UniProtKB-KW"/>
</dbReference>
<dbReference type="GO" id="GO:0004359">
    <property type="term" value="F:glutaminase activity"/>
    <property type="evidence" value="ECO:0007669"/>
    <property type="project" value="UniProtKB-EC"/>
</dbReference>
<dbReference type="GO" id="GO:0004642">
    <property type="term" value="F:phosphoribosylformylglycinamidine synthase activity"/>
    <property type="evidence" value="ECO:0007669"/>
    <property type="project" value="UniProtKB-UniRule"/>
</dbReference>
<dbReference type="GO" id="GO:0006189">
    <property type="term" value="P:'de novo' IMP biosynthetic process"/>
    <property type="evidence" value="ECO:0007669"/>
    <property type="project" value="UniProtKB-UniRule"/>
</dbReference>
<dbReference type="CDD" id="cd01740">
    <property type="entry name" value="GATase1_FGAR_AT"/>
    <property type="match status" value="1"/>
</dbReference>
<dbReference type="Gene3D" id="3.40.50.880">
    <property type="match status" value="1"/>
</dbReference>
<dbReference type="HAMAP" id="MF_00421">
    <property type="entry name" value="PurQ"/>
    <property type="match status" value="1"/>
</dbReference>
<dbReference type="InterPro" id="IPR029062">
    <property type="entry name" value="Class_I_gatase-like"/>
</dbReference>
<dbReference type="InterPro" id="IPR010075">
    <property type="entry name" value="PRibForGlyAmidine_synth_PurQ"/>
</dbReference>
<dbReference type="NCBIfam" id="TIGR01737">
    <property type="entry name" value="FGAM_synth_I"/>
    <property type="match status" value="1"/>
</dbReference>
<dbReference type="NCBIfam" id="NF002957">
    <property type="entry name" value="PRK03619.1"/>
    <property type="match status" value="1"/>
</dbReference>
<dbReference type="PANTHER" id="PTHR47552">
    <property type="entry name" value="PHOSPHORIBOSYLFORMYLGLYCINAMIDINE SYNTHASE SUBUNIT PURQ"/>
    <property type="match status" value="1"/>
</dbReference>
<dbReference type="PANTHER" id="PTHR47552:SF1">
    <property type="entry name" value="PHOSPHORIBOSYLFORMYLGLYCINAMIDINE SYNTHASE SUBUNIT PURQ"/>
    <property type="match status" value="1"/>
</dbReference>
<dbReference type="Pfam" id="PF13507">
    <property type="entry name" value="GATase_5"/>
    <property type="match status" value="1"/>
</dbReference>
<dbReference type="PIRSF" id="PIRSF001586">
    <property type="entry name" value="FGAM_synth_I"/>
    <property type="match status" value="1"/>
</dbReference>
<dbReference type="SMART" id="SM01211">
    <property type="entry name" value="GATase_5"/>
    <property type="match status" value="1"/>
</dbReference>
<dbReference type="SUPFAM" id="SSF52317">
    <property type="entry name" value="Class I glutamine amidotransferase-like"/>
    <property type="match status" value="1"/>
</dbReference>
<dbReference type="PROSITE" id="PS51273">
    <property type="entry name" value="GATASE_TYPE_1"/>
    <property type="match status" value="1"/>
</dbReference>
<proteinExistence type="inferred from homology"/>
<organism>
    <name type="scientific">Rubrobacter xylanophilus (strain DSM 9941 / JCM 11954 / NBRC 16129 / PRD-1)</name>
    <dbReference type="NCBI Taxonomy" id="266117"/>
    <lineage>
        <taxon>Bacteria</taxon>
        <taxon>Bacillati</taxon>
        <taxon>Actinomycetota</taxon>
        <taxon>Rubrobacteria</taxon>
        <taxon>Rubrobacterales</taxon>
        <taxon>Rubrobacteraceae</taxon>
        <taxon>Rubrobacter</taxon>
    </lineage>
</organism>
<feature type="chain" id="PRO_0000252728" description="Phosphoribosylformylglycinamidine synthase subunit PurQ">
    <location>
        <begin position="1"/>
        <end position="220"/>
    </location>
</feature>
<feature type="domain" description="Glutamine amidotransferase type-1" evidence="1">
    <location>
        <begin position="2"/>
        <end position="220"/>
    </location>
</feature>
<feature type="active site" description="Nucleophile" evidence="1">
    <location>
        <position position="85"/>
    </location>
</feature>
<feature type="active site" evidence="1">
    <location>
        <position position="193"/>
    </location>
</feature>
<feature type="active site" evidence="1">
    <location>
        <position position="195"/>
    </location>
</feature>
<protein>
    <recommendedName>
        <fullName evidence="1">Phosphoribosylformylglycinamidine synthase subunit PurQ</fullName>
        <shortName evidence="1">FGAM synthase</shortName>
        <ecNumber evidence="1">6.3.5.3</ecNumber>
    </recommendedName>
    <alternativeName>
        <fullName evidence="1">Formylglycinamide ribonucleotide amidotransferase subunit I</fullName>
        <shortName evidence="1">FGAR amidotransferase I</shortName>
        <shortName evidence="1">FGAR-AT I</shortName>
    </alternativeName>
    <alternativeName>
        <fullName evidence="1">Glutaminase PurQ</fullName>
        <ecNumber evidence="1">3.5.1.2</ecNumber>
    </alternativeName>
    <alternativeName>
        <fullName evidence="1">Phosphoribosylformylglycinamidine synthase subunit I</fullName>
    </alternativeName>
</protein>
<gene>
    <name evidence="1" type="primary">purQ</name>
    <name type="ordered locus">Rxyl_0995</name>
</gene>
<name>PURQ_RUBXD</name>
<sequence length="220" mass="23360">MRVGVVVFPGSNCDRDALHAVERAGAEPVELWHADADLKGSDAVILPGGFSYGDYLRPGAIARFARVMGPLEAFAREGGPVLGVCNGFQVLCEAHLLPGALLQNRGLRFVCRRVRVRVERADTPWTAACAPGEELTLPVAHNEGNYFADPATLARLEEEGRVVLRYLENPNGSANDIAGVCSEGRNVVGLMPHPERASDPLLGSGEGLGILRSVLAGAKV</sequence>
<reference key="1">
    <citation type="submission" date="2006-06" db="EMBL/GenBank/DDBJ databases">
        <title>Complete sequence of Rubrobacter xylanophilus DSM 9941.</title>
        <authorList>
            <consortium name="US DOE Joint Genome Institute"/>
            <person name="Copeland A."/>
            <person name="Lucas S."/>
            <person name="Lapidus A."/>
            <person name="Barry K."/>
            <person name="Detter J.C."/>
            <person name="Glavina del Rio T."/>
            <person name="Hammon N."/>
            <person name="Israni S."/>
            <person name="Dalin E."/>
            <person name="Tice H."/>
            <person name="Pitluck S."/>
            <person name="Munk A.C."/>
            <person name="Brettin T."/>
            <person name="Bruce D."/>
            <person name="Han C."/>
            <person name="Tapia R."/>
            <person name="Gilna P."/>
            <person name="Schmutz J."/>
            <person name="Larimer F."/>
            <person name="Land M."/>
            <person name="Hauser L."/>
            <person name="Kyrpides N."/>
            <person name="Lykidis A."/>
            <person name="da Costa M.S."/>
            <person name="Rainey F.A."/>
            <person name="Empadinhas N."/>
            <person name="Jolivet E."/>
            <person name="Battista J.R."/>
            <person name="Richardson P."/>
        </authorList>
    </citation>
    <scope>NUCLEOTIDE SEQUENCE [LARGE SCALE GENOMIC DNA]</scope>
    <source>
        <strain>DSM 9941 / JCM 11954 / NBRC 16129 / PRD-1</strain>
    </source>
</reference>
<evidence type="ECO:0000255" key="1">
    <source>
        <dbReference type="HAMAP-Rule" id="MF_00421"/>
    </source>
</evidence>